<accession>B2V7K8</accession>
<proteinExistence type="inferred from homology"/>
<keyword id="KW-0687">Ribonucleoprotein</keyword>
<keyword id="KW-0689">Ribosomal protein</keyword>
<keyword id="KW-0694">RNA-binding</keyword>
<keyword id="KW-0699">rRNA-binding</keyword>
<comment type="function">
    <text evidence="1">This protein binds specifically to 23S rRNA; its binding is stimulated by other ribosomal proteins, e.g. L4, L17, and L20. It is important during the early stages of 50S assembly. It makes multiple contacts with different domains of the 23S rRNA in the assembled 50S subunit and ribosome (By similarity).</text>
</comment>
<comment type="function">
    <text evidence="1">The globular domain of the protein is located near the polypeptide exit tunnel on the outside of the subunit, while an extended beta-hairpin is found that lines the wall of the exit tunnel in the center of the 70S ribosome.</text>
</comment>
<comment type="subunit">
    <text evidence="1">Part of the 50S ribosomal subunit.</text>
</comment>
<comment type="similarity">
    <text evidence="1">Belongs to the universal ribosomal protein uL22 family.</text>
</comment>
<sequence>MENTARAILRYAHLSPYKARQVINLIRGKDIATALAILSQIPKKSARIVEKVLKSAIANAEFKGMDIDNLYISKIHAEEGPMLKRYTPKAHGRATMIRRRFSHIYVYLAEKQQEDK</sequence>
<name>RL22_SULSY</name>
<dbReference type="EMBL" id="CP001080">
    <property type="protein sequence ID" value="ACD65931.1"/>
    <property type="molecule type" value="Genomic_DNA"/>
</dbReference>
<dbReference type="RefSeq" id="WP_012459020.1">
    <property type="nucleotide sequence ID" value="NC_010730.1"/>
</dbReference>
<dbReference type="SMR" id="B2V7K8"/>
<dbReference type="STRING" id="436114.SYO3AOP1_0286"/>
<dbReference type="KEGG" id="sul:SYO3AOP1_0286"/>
<dbReference type="eggNOG" id="COG0091">
    <property type="taxonomic scope" value="Bacteria"/>
</dbReference>
<dbReference type="HOGENOM" id="CLU_083987_3_3_0"/>
<dbReference type="GO" id="GO:0022625">
    <property type="term" value="C:cytosolic large ribosomal subunit"/>
    <property type="evidence" value="ECO:0007669"/>
    <property type="project" value="TreeGrafter"/>
</dbReference>
<dbReference type="GO" id="GO:0019843">
    <property type="term" value="F:rRNA binding"/>
    <property type="evidence" value="ECO:0007669"/>
    <property type="project" value="UniProtKB-UniRule"/>
</dbReference>
<dbReference type="GO" id="GO:0003735">
    <property type="term" value="F:structural constituent of ribosome"/>
    <property type="evidence" value="ECO:0007669"/>
    <property type="project" value="InterPro"/>
</dbReference>
<dbReference type="GO" id="GO:0006412">
    <property type="term" value="P:translation"/>
    <property type="evidence" value="ECO:0007669"/>
    <property type="project" value="UniProtKB-UniRule"/>
</dbReference>
<dbReference type="CDD" id="cd00336">
    <property type="entry name" value="Ribosomal_L22"/>
    <property type="match status" value="1"/>
</dbReference>
<dbReference type="Gene3D" id="3.90.470.10">
    <property type="entry name" value="Ribosomal protein L22/L17"/>
    <property type="match status" value="1"/>
</dbReference>
<dbReference type="HAMAP" id="MF_01331_B">
    <property type="entry name" value="Ribosomal_uL22_B"/>
    <property type="match status" value="1"/>
</dbReference>
<dbReference type="InterPro" id="IPR001063">
    <property type="entry name" value="Ribosomal_uL22"/>
</dbReference>
<dbReference type="InterPro" id="IPR005727">
    <property type="entry name" value="Ribosomal_uL22_bac/chlpt-type"/>
</dbReference>
<dbReference type="InterPro" id="IPR047867">
    <property type="entry name" value="Ribosomal_uL22_bac/org-type"/>
</dbReference>
<dbReference type="InterPro" id="IPR036394">
    <property type="entry name" value="Ribosomal_uL22_sf"/>
</dbReference>
<dbReference type="NCBIfam" id="TIGR01044">
    <property type="entry name" value="rplV_bact"/>
    <property type="match status" value="1"/>
</dbReference>
<dbReference type="PANTHER" id="PTHR13501">
    <property type="entry name" value="CHLOROPLAST 50S RIBOSOMAL PROTEIN L22-RELATED"/>
    <property type="match status" value="1"/>
</dbReference>
<dbReference type="PANTHER" id="PTHR13501:SF8">
    <property type="entry name" value="LARGE RIBOSOMAL SUBUNIT PROTEIN UL22M"/>
    <property type="match status" value="1"/>
</dbReference>
<dbReference type="Pfam" id="PF00237">
    <property type="entry name" value="Ribosomal_L22"/>
    <property type="match status" value="1"/>
</dbReference>
<dbReference type="SUPFAM" id="SSF54843">
    <property type="entry name" value="Ribosomal protein L22"/>
    <property type="match status" value="1"/>
</dbReference>
<gene>
    <name evidence="1" type="primary">rplV</name>
    <name type="ordered locus">SYO3AOP1_0286</name>
</gene>
<protein>
    <recommendedName>
        <fullName evidence="1">Large ribosomal subunit protein uL22</fullName>
    </recommendedName>
    <alternativeName>
        <fullName evidence="2">50S ribosomal protein L22</fullName>
    </alternativeName>
</protein>
<evidence type="ECO:0000255" key="1">
    <source>
        <dbReference type="HAMAP-Rule" id="MF_01331"/>
    </source>
</evidence>
<evidence type="ECO:0000305" key="2"/>
<feature type="chain" id="PRO_0000354523" description="Large ribosomal subunit protein uL22">
    <location>
        <begin position="1"/>
        <end position="116"/>
    </location>
</feature>
<reference key="1">
    <citation type="journal article" date="2009" name="J. Bacteriol.">
        <title>Complete and draft genome sequences of six members of the Aquificales.</title>
        <authorList>
            <person name="Reysenbach A.-L."/>
            <person name="Hamamura N."/>
            <person name="Podar M."/>
            <person name="Griffiths E."/>
            <person name="Ferreira S."/>
            <person name="Hochstein R."/>
            <person name="Heidelberg J."/>
            <person name="Johnson J."/>
            <person name="Mead D."/>
            <person name="Pohorille A."/>
            <person name="Sarmiento M."/>
            <person name="Schweighofer K."/>
            <person name="Seshadri R."/>
            <person name="Voytek M.A."/>
        </authorList>
    </citation>
    <scope>NUCLEOTIDE SEQUENCE [LARGE SCALE GENOMIC DNA]</scope>
    <source>
        <strain>YO3AOP1</strain>
    </source>
</reference>
<organism>
    <name type="scientific">Sulfurihydrogenibium sp. (strain YO3AOP1)</name>
    <dbReference type="NCBI Taxonomy" id="436114"/>
    <lineage>
        <taxon>Bacteria</taxon>
        <taxon>Pseudomonadati</taxon>
        <taxon>Aquificota</taxon>
        <taxon>Aquificia</taxon>
        <taxon>Aquificales</taxon>
        <taxon>Hydrogenothermaceae</taxon>
        <taxon>Sulfurihydrogenibium</taxon>
    </lineage>
</organism>